<reference key="1">
    <citation type="submission" date="2006-12" db="EMBL/GenBank/DDBJ databases">
        <title>Complete sequence of Shewanella amazonensis SB2B.</title>
        <authorList>
            <consortium name="US DOE Joint Genome Institute"/>
            <person name="Copeland A."/>
            <person name="Lucas S."/>
            <person name="Lapidus A."/>
            <person name="Barry K."/>
            <person name="Detter J.C."/>
            <person name="Glavina del Rio T."/>
            <person name="Hammon N."/>
            <person name="Israni S."/>
            <person name="Dalin E."/>
            <person name="Tice H."/>
            <person name="Pitluck S."/>
            <person name="Munk A.C."/>
            <person name="Brettin T."/>
            <person name="Bruce D."/>
            <person name="Han C."/>
            <person name="Tapia R."/>
            <person name="Gilna P."/>
            <person name="Schmutz J."/>
            <person name="Larimer F."/>
            <person name="Land M."/>
            <person name="Hauser L."/>
            <person name="Kyrpides N."/>
            <person name="Mikhailova N."/>
            <person name="Fredrickson J."/>
            <person name="Richardson P."/>
        </authorList>
    </citation>
    <scope>NUCLEOTIDE SEQUENCE [LARGE SCALE GENOMIC DNA]</scope>
    <source>
        <strain>ATCC BAA-1098 / SB2B</strain>
    </source>
</reference>
<dbReference type="EC" id="6.3.2.2" evidence="1"/>
<dbReference type="EMBL" id="CP000507">
    <property type="protein sequence ID" value="ABL99265.1"/>
    <property type="molecule type" value="Genomic_DNA"/>
</dbReference>
<dbReference type="RefSeq" id="WP_011759174.1">
    <property type="nucleotide sequence ID" value="NC_008700.1"/>
</dbReference>
<dbReference type="SMR" id="A1S4F9"/>
<dbReference type="STRING" id="326297.Sama_1058"/>
<dbReference type="KEGG" id="saz:Sama_1058"/>
<dbReference type="eggNOG" id="COG2918">
    <property type="taxonomic scope" value="Bacteria"/>
</dbReference>
<dbReference type="HOGENOM" id="CLU_020728_3_0_6"/>
<dbReference type="OrthoDB" id="9803907at2"/>
<dbReference type="UniPathway" id="UPA00142">
    <property type="reaction ID" value="UER00209"/>
</dbReference>
<dbReference type="Proteomes" id="UP000009175">
    <property type="component" value="Chromosome"/>
</dbReference>
<dbReference type="GO" id="GO:0005829">
    <property type="term" value="C:cytosol"/>
    <property type="evidence" value="ECO:0007669"/>
    <property type="project" value="TreeGrafter"/>
</dbReference>
<dbReference type="GO" id="GO:0005524">
    <property type="term" value="F:ATP binding"/>
    <property type="evidence" value="ECO:0007669"/>
    <property type="project" value="UniProtKB-KW"/>
</dbReference>
<dbReference type="GO" id="GO:0004357">
    <property type="term" value="F:glutamate-cysteine ligase activity"/>
    <property type="evidence" value="ECO:0007669"/>
    <property type="project" value="UniProtKB-UniRule"/>
</dbReference>
<dbReference type="GO" id="GO:0046872">
    <property type="term" value="F:metal ion binding"/>
    <property type="evidence" value="ECO:0007669"/>
    <property type="project" value="TreeGrafter"/>
</dbReference>
<dbReference type="GO" id="GO:0006750">
    <property type="term" value="P:glutathione biosynthetic process"/>
    <property type="evidence" value="ECO:0007669"/>
    <property type="project" value="UniProtKB-UniRule"/>
</dbReference>
<dbReference type="Gene3D" id="3.30.590.20">
    <property type="match status" value="1"/>
</dbReference>
<dbReference type="HAMAP" id="MF_00578">
    <property type="entry name" value="Glu_cys_ligase"/>
    <property type="match status" value="1"/>
</dbReference>
<dbReference type="InterPro" id="IPR014746">
    <property type="entry name" value="Gln_synth/guanido_kin_cat_dom"/>
</dbReference>
<dbReference type="InterPro" id="IPR007370">
    <property type="entry name" value="Glu_cys_ligase"/>
</dbReference>
<dbReference type="InterPro" id="IPR006334">
    <property type="entry name" value="Glut_cys_ligase"/>
</dbReference>
<dbReference type="NCBIfam" id="TIGR01434">
    <property type="entry name" value="glu_cys_ligase"/>
    <property type="match status" value="1"/>
</dbReference>
<dbReference type="PANTHER" id="PTHR38761">
    <property type="entry name" value="GLUTAMATE--CYSTEINE LIGASE"/>
    <property type="match status" value="1"/>
</dbReference>
<dbReference type="PANTHER" id="PTHR38761:SF1">
    <property type="entry name" value="GLUTAMATE--CYSTEINE LIGASE"/>
    <property type="match status" value="1"/>
</dbReference>
<dbReference type="Pfam" id="PF04262">
    <property type="entry name" value="Glu_cys_ligase"/>
    <property type="match status" value="1"/>
</dbReference>
<dbReference type="SUPFAM" id="SSF55931">
    <property type="entry name" value="Glutamine synthetase/guanido kinase"/>
    <property type="match status" value="1"/>
</dbReference>
<feature type="chain" id="PRO_1000025186" description="Glutamate--cysteine ligase">
    <location>
        <begin position="1"/>
        <end position="526"/>
    </location>
</feature>
<comment type="catalytic activity">
    <reaction evidence="1">
        <text>L-cysteine + L-glutamate + ATP = gamma-L-glutamyl-L-cysteine + ADP + phosphate + H(+)</text>
        <dbReference type="Rhea" id="RHEA:13285"/>
        <dbReference type="ChEBI" id="CHEBI:15378"/>
        <dbReference type="ChEBI" id="CHEBI:29985"/>
        <dbReference type="ChEBI" id="CHEBI:30616"/>
        <dbReference type="ChEBI" id="CHEBI:35235"/>
        <dbReference type="ChEBI" id="CHEBI:43474"/>
        <dbReference type="ChEBI" id="CHEBI:58173"/>
        <dbReference type="ChEBI" id="CHEBI:456216"/>
        <dbReference type="EC" id="6.3.2.2"/>
    </reaction>
</comment>
<comment type="pathway">
    <text evidence="1">Sulfur metabolism; glutathione biosynthesis; glutathione from L-cysteine and L-glutamate: step 1/2.</text>
</comment>
<comment type="similarity">
    <text evidence="1">Belongs to the glutamate--cysteine ligase type 1 family. Type 1 subfamily.</text>
</comment>
<gene>
    <name evidence="1" type="primary">gshA</name>
    <name type="ordered locus">Sama_1058</name>
</gene>
<evidence type="ECO:0000255" key="1">
    <source>
        <dbReference type="HAMAP-Rule" id="MF_00578"/>
    </source>
</evidence>
<sequence>MTAFNDRLGALSDAEGRKALAGLRRGLEREALRITSCCQLALDPHPKALGSALTHSRITTDYSEALLEFITPVSGNIEDLLEGLTETHAYTLKHLDGQKLWPVSMPCYVGDVKDIPIAQYGTSNTGRMKTLYRKGLTYRYGALMQIISGVHFNFSLSSDLWPRLHALSGSSLSLDEFISESYFGLIRNYRRLVWVLPYLFGASPAICGSFLKGQKTSLEFEKTAGGTLYLPYATSLRMSDLGYTNKEQASLNISYDSLHDYLQGIREAICLPSAKFAEIGVKVDGEYRQLNANVLQIENEFYAPIRAKRVTRKGEKPSEALARAGVEYIEVRALDVNPFSPVGVEASQLRFLDVFLLYCLLSDSPKSDAVCESEITSNLRAVIHEGRKPGLALSRQGEPVTLKAWLLELFDEFDKLASLLDIDGSDYAEALAQWRMAVEDPALTLSGRVHAAVVEQGMNHGDFVMGLAAKYQDFFLSYPLSPGVEAGFQAEAASSLAAQAEIEASDEESFDEYLKGYFKGVPCALS</sequence>
<proteinExistence type="inferred from homology"/>
<keyword id="KW-0067">ATP-binding</keyword>
<keyword id="KW-0317">Glutathione biosynthesis</keyword>
<keyword id="KW-0436">Ligase</keyword>
<keyword id="KW-0547">Nucleotide-binding</keyword>
<keyword id="KW-1185">Reference proteome</keyword>
<name>GSH1_SHEAM</name>
<accession>A1S4F9</accession>
<protein>
    <recommendedName>
        <fullName evidence="1">Glutamate--cysteine ligase</fullName>
        <ecNumber evidence="1">6.3.2.2</ecNumber>
    </recommendedName>
    <alternativeName>
        <fullName evidence="1">Gamma-ECS</fullName>
        <shortName evidence="1">GCS</shortName>
    </alternativeName>
    <alternativeName>
        <fullName evidence="1">Gamma-glutamylcysteine synthetase</fullName>
    </alternativeName>
</protein>
<organism>
    <name type="scientific">Shewanella amazonensis (strain ATCC BAA-1098 / SB2B)</name>
    <dbReference type="NCBI Taxonomy" id="326297"/>
    <lineage>
        <taxon>Bacteria</taxon>
        <taxon>Pseudomonadati</taxon>
        <taxon>Pseudomonadota</taxon>
        <taxon>Gammaproteobacteria</taxon>
        <taxon>Alteromonadales</taxon>
        <taxon>Shewanellaceae</taxon>
        <taxon>Shewanella</taxon>
    </lineage>
</organism>